<keyword id="KW-1003">Cell membrane</keyword>
<keyword id="KW-0325">Glycoprotein</keyword>
<keyword id="KW-0472">Membrane</keyword>
<keyword id="KW-1185">Reference proteome</keyword>
<keyword id="KW-0812">Transmembrane</keyword>
<keyword id="KW-1133">Transmembrane helix</keyword>
<protein>
    <recommendedName>
        <fullName>CASP-like protein 3A1</fullName>
        <shortName>RcCASPL3A1</shortName>
    </recommendedName>
</protein>
<accession>B9RQG7</accession>
<organism>
    <name type="scientific">Ricinus communis</name>
    <name type="common">Castor bean</name>
    <dbReference type="NCBI Taxonomy" id="3988"/>
    <lineage>
        <taxon>Eukaryota</taxon>
        <taxon>Viridiplantae</taxon>
        <taxon>Streptophyta</taxon>
        <taxon>Embryophyta</taxon>
        <taxon>Tracheophyta</taxon>
        <taxon>Spermatophyta</taxon>
        <taxon>Magnoliopsida</taxon>
        <taxon>eudicotyledons</taxon>
        <taxon>Gunneridae</taxon>
        <taxon>Pentapetalae</taxon>
        <taxon>rosids</taxon>
        <taxon>fabids</taxon>
        <taxon>Malpighiales</taxon>
        <taxon>Euphorbiaceae</taxon>
        <taxon>Acalyphoideae</taxon>
        <taxon>Acalypheae</taxon>
        <taxon>Ricinus</taxon>
    </lineage>
</organism>
<evidence type="ECO:0000250" key="1"/>
<evidence type="ECO:0000255" key="2"/>
<evidence type="ECO:0000305" key="3"/>
<dbReference type="EMBL" id="EQ973801">
    <property type="protein sequence ID" value="EEF46406.1"/>
    <property type="molecule type" value="Genomic_DNA"/>
</dbReference>
<dbReference type="SMR" id="B9RQG7"/>
<dbReference type="STRING" id="3988.B9RQG7"/>
<dbReference type="eggNOG" id="ENOG502RN9B">
    <property type="taxonomic scope" value="Eukaryota"/>
</dbReference>
<dbReference type="InParanoid" id="B9RQG7"/>
<dbReference type="OMA" id="CKPLHKF"/>
<dbReference type="Proteomes" id="UP000008311">
    <property type="component" value="Unassembled WGS sequence"/>
</dbReference>
<dbReference type="GO" id="GO:0005886">
    <property type="term" value="C:plasma membrane"/>
    <property type="evidence" value="ECO:0007669"/>
    <property type="project" value="UniProtKB-SubCell"/>
</dbReference>
<dbReference type="InterPro" id="IPR006459">
    <property type="entry name" value="CASP/CASPL"/>
</dbReference>
<dbReference type="InterPro" id="IPR006702">
    <property type="entry name" value="CASP_dom"/>
</dbReference>
<dbReference type="NCBIfam" id="TIGR01569">
    <property type="entry name" value="A_tha_TIGR01569"/>
    <property type="match status" value="1"/>
</dbReference>
<dbReference type="PANTHER" id="PTHR33573:SF48">
    <property type="entry name" value="CASP-LIKE PROTEIN 3A1"/>
    <property type="match status" value="1"/>
</dbReference>
<dbReference type="PANTHER" id="PTHR33573">
    <property type="entry name" value="CASP-LIKE PROTEIN 4A4"/>
    <property type="match status" value="1"/>
</dbReference>
<dbReference type="Pfam" id="PF04535">
    <property type="entry name" value="CASP_dom"/>
    <property type="match status" value="1"/>
</dbReference>
<proteinExistence type="evidence at transcript level"/>
<reference key="1">
    <citation type="journal article" date="2010" name="Nat. Biotechnol.">
        <title>Draft genome sequence of the oilseed species Ricinus communis.</title>
        <authorList>
            <person name="Chan A.P."/>
            <person name="Crabtree J."/>
            <person name="Zhao Q."/>
            <person name="Lorenzi H."/>
            <person name="Orvis J."/>
            <person name="Puiu D."/>
            <person name="Melake-Berhan A."/>
            <person name="Jones K.M."/>
            <person name="Redman J."/>
            <person name="Chen G."/>
            <person name="Cahoon E.B."/>
            <person name="Gedil M."/>
            <person name="Stanke M."/>
            <person name="Haas B.J."/>
            <person name="Wortman J.R."/>
            <person name="Fraser-Liggett C.M."/>
            <person name="Ravel J."/>
            <person name="Rabinowicz P.D."/>
        </authorList>
    </citation>
    <scope>NUCLEOTIDE SEQUENCE [LARGE SCALE GENOMIC DNA]</scope>
    <source>
        <strain>cv. Hale</strain>
    </source>
</reference>
<reference key="2">
    <citation type="journal article" date="2014" name="Plant Physiol.">
        <title>Functional and evolutionary analysis of the CASPARIAN STRIP MEMBRANE DOMAIN PROTEIN family.</title>
        <authorList>
            <person name="Roppolo D."/>
            <person name="Boeckmann B."/>
            <person name="Pfister A."/>
            <person name="Boutet E."/>
            <person name="Rubio M.C."/>
            <person name="Denervaud-Tendon V."/>
            <person name="Vermeer J.E."/>
            <person name="Gheyselinck J."/>
            <person name="Xenarios I."/>
            <person name="Geldner N."/>
        </authorList>
    </citation>
    <scope>GENE FAMILY</scope>
    <scope>NOMENCLATURE</scope>
</reference>
<name>CSPLF_RICCO</name>
<comment type="subunit">
    <text evidence="1">Homodimer and heterodimers.</text>
</comment>
<comment type="subcellular location">
    <subcellularLocation>
        <location evidence="1">Cell membrane</location>
        <topology evidence="1">Multi-pass membrane protein</topology>
    </subcellularLocation>
</comment>
<comment type="similarity">
    <text evidence="3">Belongs to the Casparian strip membrane proteins (CASP) family.</text>
</comment>
<feature type="chain" id="PRO_0000391587" description="CASP-like protein 3A1">
    <location>
        <begin position="1"/>
        <end position="214"/>
    </location>
</feature>
<feature type="topological domain" description="Cytoplasmic" evidence="2">
    <location>
        <begin position="1"/>
        <end position="49"/>
    </location>
</feature>
<feature type="transmembrane region" description="Helical" evidence="2">
    <location>
        <begin position="50"/>
        <end position="70"/>
    </location>
</feature>
<feature type="topological domain" description="Extracellular" evidence="2">
    <location>
        <begin position="71"/>
        <end position="96"/>
    </location>
</feature>
<feature type="transmembrane region" description="Helical" evidence="2">
    <location>
        <begin position="97"/>
        <end position="117"/>
    </location>
</feature>
<feature type="topological domain" description="Cytoplasmic" evidence="2">
    <location>
        <begin position="118"/>
        <end position="132"/>
    </location>
</feature>
<feature type="transmembrane region" description="Helical" evidence="2">
    <location>
        <begin position="133"/>
        <end position="153"/>
    </location>
</feature>
<feature type="topological domain" description="Extracellular" evidence="2">
    <location>
        <begin position="154"/>
        <end position="182"/>
    </location>
</feature>
<feature type="transmembrane region" description="Helical" evidence="2">
    <location>
        <begin position="183"/>
        <end position="203"/>
    </location>
</feature>
<feature type="topological domain" description="Cytoplasmic" evidence="2">
    <location>
        <begin position="204"/>
        <end position="214"/>
    </location>
</feature>
<feature type="glycosylation site" description="N-linked (GlcNAc...) asparagine" evidence="2">
    <location>
        <position position="161"/>
    </location>
</feature>
<sequence>MTNGQKIEVAVQLPESKVAATENNETMSGPLVVGGGVAKPFGRKADVMHVILRLLCTITSVTAVSFMVTAHQSSTVSIYGFMLPVRSKWSFSHSFEYLVGVSAAVAAHSLLQLLISMSRLLRKSPVIPSRSHAWLIFAGDQVFAYAMISAGAAASGVTNLNRTGIQHTALPNFCKPLNYFCNHVAVSIAFAFISCLLLAALAVQEVIWLSKSKY</sequence>
<gene>
    <name type="ORF">RCOM_1491260</name>
</gene>